<organism>
    <name type="scientific">Staphylococcus aureus (strain Mu50 / ATCC 700699)</name>
    <dbReference type="NCBI Taxonomy" id="158878"/>
    <lineage>
        <taxon>Bacteria</taxon>
        <taxon>Bacillati</taxon>
        <taxon>Bacillota</taxon>
        <taxon>Bacilli</taxon>
        <taxon>Bacillales</taxon>
        <taxon>Staphylococcaceae</taxon>
        <taxon>Staphylococcus</taxon>
    </lineage>
</organism>
<sequence length="341" mass="36979">MSTNIAINGMGRIGRMVLRIALQNKNLNVVAINASYPPETIAHLINYDTTHGKYNLKVEPIENGLQVGDHKIKLVADRNPENLPWKELDIDIAIDATGKFNHGDKAIAHIKAGAKKVLLTGPSKGGHVQMVVKGVNDNQLDIEAFDIFSNASCTTNCIGPVAKVLNNQFGIVNGLMTTVHAITNDQKNIDNPHKDLRRARSCNESIIPTSTGAAKALKEVLPELEGKLHGMALRVPTKNVSLVDLVVDLEKEVTAEEVNQAFENAGLEGIIEVEHQPLVSVDFNTNPNSAIIDAKSTMVMSGNKVKVIAWYDNEWGYSNRVVDVAEQIGALLTSKETVSAS</sequence>
<name>G3P2_STAAM</name>
<protein>
    <recommendedName>
        <fullName evidence="2">Glyceraldehyde-3-phosphate dehydrogenase 2</fullName>
        <shortName evidence="2">GAPDH 2</shortName>
        <ecNumber evidence="2">1.2.1.12</ecNumber>
    </recommendedName>
    <alternativeName>
        <fullName evidence="2">NAD-dependent glyceraldehyde-3-phosphate dehydrogenase</fullName>
    </alternativeName>
</protein>
<proteinExistence type="inferred from homology"/>
<reference key="1">
    <citation type="journal article" date="2001" name="Lancet">
        <title>Whole genome sequencing of meticillin-resistant Staphylococcus aureus.</title>
        <authorList>
            <person name="Kuroda M."/>
            <person name="Ohta T."/>
            <person name="Uchiyama I."/>
            <person name="Baba T."/>
            <person name="Yuzawa H."/>
            <person name="Kobayashi I."/>
            <person name="Cui L."/>
            <person name="Oguchi A."/>
            <person name="Aoki K."/>
            <person name="Nagai Y."/>
            <person name="Lian J.-Q."/>
            <person name="Ito T."/>
            <person name="Kanamori M."/>
            <person name="Matsumaru H."/>
            <person name="Maruyama A."/>
            <person name="Murakami H."/>
            <person name="Hosoyama A."/>
            <person name="Mizutani-Ui Y."/>
            <person name="Takahashi N.K."/>
            <person name="Sawano T."/>
            <person name="Inoue R."/>
            <person name="Kaito C."/>
            <person name="Sekimizu K."/>
            <person name="Hirakawa H."/>
            <person name="Kuhara S."/>
            <person name="Goto S."/>
            <person name="Yabuzaki J."/>
            <person name="Kanehisa M."/>
            <person name="Yamashita A."/>
            <person name="Oshima K."/>
            <person name="Furuya K."/>
            <person name="Yoshino C."/>
            <person name="Shiba T."/>
            <person name="Hattori M."/>
            <person name="Ogasawara N."/>
            <person name="Hayashi H."/>
            <person name="Hiramatsu K."/>
        </authorList>
    </citation>
    <scope>NUCLEOTIDE SEQUENCE [LARGE SCALE GENOMIC DNA]</scope>
    <source>
        <strain>Mu50 / ATCC 700699</strain>
    </source>
</reference>
<feature type="chain" id="PRO_0000145692" description="Glyceraldehyde-3-phosphate dehydrogenase 2">
    <location>
        <begin position="1"/>
        <end position="341"/>
    </location>
</feature>
<feature type="active site" description="Nucleophile" evidence="2">
    <location>
        <position position="153"/>
    </location>
</feature>
<feature type="binding site" evidence="2">
    <location>
        <begin position="12"/>
        <end position="13"/>
    </location>
    <ligand>
        <name>NAD(+)</name>
        <dbReference type="ChEBI" id="CHEBI:57540"/>
    </ligand>
</feature>
<feature type="binding site" evidence="2">
    <location>
        <position position="78"/>
    </location>
    <ligand>
        <name>NAD(+)</name>
        <dbReference type="ChEBI" id="CHEBI:57540"/>
    </ligand>
</feature>
<feature type="binding site" evidence="2">
    <location>
        <position position="120"/>
    </location>
    <ligand>
        <name>NAD(+)</name>
        <dbReference type="ChEBI" id="CHEBI:57540"/>
    </ligand>
</feature>
<feature type="binding site" evidence="2">
    <location>
        <begin position="152"/>
        <end position="154"/>
    </location>
    <ligand>
        <name>D-glyceraldehyde 3-phosphate</name>
        <dbReference type="ChEBI" id="CHEBI:59776"/>
    </ligand>
</feature>
<feature type="binding site" evidence="2">
    <location>
        <position position="183"/>
    </location>
    <ligand>
        <name>D-glyceraldehyde 3-phosphate</name>
        <dbReference type="ChEBI" id="CHEBI:59776"/>
    </ligand>
</feature>
<feature type="binding site" evidence="2">
    <location>
        <position position="184"/>
    </location>
    <ligand>
        <name>NAD(+)</name>
        <dbReference type="ChEBI" id="CHEBI:57540"/>
    </ligand>
</feature>
<feature type="binding site" evidence="1">
    <location>
        <position position="198"/>
    </location>
    <ligand>
        <name>D-glyceraldehyde 3-phosphate</name>
        <dbReference type="ChEBI" id="CHEBI:59776"/>
    </ligand>
</feature>
<feature type="binding site" evidence="2">
    <location>
        <begin position="211"/>
        <end position="212"/>
    </location>
    <ligand>
        <name>D-glyceraldehyde 3-phosphate</name>
        <dbReference type="ChEBI" id="CHEBI:59776"/>
    </ligand>
</feature>
<feature type="binding site" evidence="2">
    <location>
        <position position="234"/>
    </location>
    <ligand>
        <name>D-glyceraldehyde 3-phosphate</name>
        <dbReference type="ChEBI" id="CHEBI:59776"/>
    </ligand>
</feature>
<feature type="binding site" evidence="2">
    <location>
        <position position="313"/>
    </location>
    <ligand>
        <name>NAD(+)</name>
        <dbReference type="ChEBI" id="CHEBI:57540"/>
    </ligand>
</feature>
<feature type="site" description="Activates thiol group during catalysis" evidence="2">
    <location>
        <position position="180"/>
    </location>
</feature>
<dbReference type="EC" id="1.2.1.12" evidence="2"/>
<dbReference type="EMBL" id="BA000017">
    <property type="protein sequence ID" value="BAB57849.1"/>
    <property type="molecule type" value="Genomic_DNA"/>
</dbReference>
<dbReference type="SMR" id="P64180"/>
<dbReference type="KEGG" id="sav:SAV1687"/>
<dbReference type="HOGENOM" id="CLU_030140_0_2_9"/>
<dbReference type="PhylomeDB" id="P64180"/>
<dbReference type="UniPathway" id="UPA00109">
    <property type="reaction ID" value="UER00184"/>
</dbReference>
<dbReference type="Proteomes" id="UP000002481">
    <property type="component" value="Chromosome"/>
</dbReference>
<dbReference type="GO" id="GO:0005737">
    <property type="term" value="C:cytoplasm"/>
    <property type="evidence" value="ECO:0007669"/>
    <property type="project" value="UniProtKB-SubCell"/>
</dbReference>
<dbReference type="GO" id="GO:0004365">
    <property type="term" value="F:glyceraldehyde-3-phosphate dehydrogenase (NAD+) (phosphorylating) activity"/>
    <property type="evidence" value="ECO:0000250"/>
    <property type="project" value="UniProtKB"/>
</dbReference>
<dbReference type="GO" id="GO:0051287">
    <property type="term" value="F:NAD binding"/>
    <property type="evidence" value="ECO:0000250"/>
    <property type="project" value="UniProtKB"/>
</dbReference>
<dbReference type="GO" id="GO:0050661">
    <property type="term" value="F:NADP binding"/>
    <property type="evidence" value="ECO:0007669"/>
    <property type="project" value="InterPro"/>
</dbReference>
<dbReference type="GO" id="GO:0006006">
    <property type="term" value="P:glucose metabolic process"/>
    <property type="evidence" value="ECO:0007669"/>
    <property type="project" value="InterPro"/>
</dbReference>
<dbReference type="GO" id="GO:0006096">
    <property type="term" value="P:glycolytic process"/>
    <property type="evidence" value="ECO:0007669"/>
    <property type="project" value="UniProtKB-UniPathway"/>
</dbReference>
<dbReference type="CDD" id="cd18126">
    <property type="entry name" value="GAPDH_I_C"/>
    <property type="match status" value="1"/>
</dbReference>
<dbReference type="CDD" id="cd05214">
    <property type="entry name" value="GAPDH_I_N"/>
    <property type="match status" value="1"/>
</dbReference>
<dbReference type="FunFam" id="3.30.360.10:FF:000002">
    <property type="entry name" value="Glyceraldehyde-3-phosphate dehydrogenase"/>
    <property type="match status" value="1"/>
</dbReference>
<dbReference type="FunFam" id="3.40.50.720:FF:000001">
    <property type="entry name" value="Glyceraldehyde-3-phosphate dehydrogenase"/>
    <property type="match status" value="1"/>
</dbReference>
<dbReference type="Gene3D" id="3.30.360.10">
    <property type="entry name" value="Dihydrodipicolinate Reductase, domain 2"/>
    <property type="match status" value="1"/>
</dbReference>
<dbReference type="Gene3D" id="3.40.50.720">
    <property type="entry name" value="NAD(P)-binding Rossmann-like Domain"/>
    <property type="match status" value="1"/>
</dbReference>
<dbReference type="InterPro" id="IPR020831">
    <property type="entry name" value="GlycerAld/Erythrose_P_DH"/>
</dbReference>
<dbReference type="InterPro" id="IPR020830">
    <property type="entry name" value="GlycerAld_3-P_DH_AS"/>
</dbReference>
<dbReference type="InterPro" id="IPR020829">
    <property type="entry name" value="GlycerAld_3-P_DH_cat"/>
</dbReference>
<dbReference type="InterPro" id="IPR020828">
    <property type="entry name" value="GlycerAld_3-P_DH_NAD(P)-bd"/>
</dbReference>
<dbReference type="InterPro" id="IPR006424">
    <property type="entry name" value="Glyceraldehyde-3-P_DH_1"/>
</dbReference>
<dbReference type="InterPro" id="IPR036291">
    <property type="entry name" value="NAD(P)-bd_dom_sf"/>
</dbReference>
<dbReference type="NCBIfam" id="TIGR01534">
    <property type="entry name" value="GAPDH-I"/>
    <property type="match status" value="1"/>
</dbReference>
<dbReference type="PANTHER" id="PTHR43148">
    <property type="entry name" value="GLYCERALDEHYDE-3-PHOSPHATE DEHYDROGENASE 2"/>
    <property type="match status" value="1"/>
</dbReference>
<dbReference type="Pfam" id="PF02800">
    <property type="entry name" value="Gp_dh_C"/>
    <property type="match status" value="1"/>
</dbReference>
<dbReference type="Pfam" id="PF00044">
    <property type="entry name" value="Gp_dh_N"/>
    <property type="match status" value="1"/>
</dbReference>
<dbReference type="PIRSF" id="PIRSF000149">
    <property type="entry name" value="GAP_DH"/>
    <property type="match status" value="1"/>
</dbReference>
<dbReference type="PRINTS" id="PR00078">
    <property type="entry name" value="G3PDHDRGNASE"/>
</dbReference>
<dbReference type="SMART" id="SM00846">
    <property type="entry name" value="Gp_dh_N"/>
    <property type="match status" value="1"/>
</dbReference>
<dbReference type="SUPFAM" id="SSF55347">
    <property type="entry name" value="Glyceraldehyde-3-phosphate dehydrogenase-like, C-terminal domain"/>
    <property type="match status" value="1"/>
</dbReference>
<dbReference type="SUPFAM" id="SSF51735">
    <property type="entry name" value="NAD(P)-binding Rossmann-fold domains"/>
    <property type="match status" value="1"/>
</dbReference>
<dbReference type="PROSITE" id="PS00071">
    <property type="entry name" value="GAPDH"/>
    <property type="match status" value="1"/>
</dbReference>
<accession>P64180</accession>
<accession>Q99TH5</accession>
<keyword id="KW-0963">Cytoplasm</keyword>
<keyword id="KW-0324">Glycolysis</keyword>
<keyword id="KW-0520">NAD</keyword>
<keyword id="KW-0547">Nucleotide-binding</keyword>
<keyword id="KW-0560">Oxidoreductase</keyword>
<comment type="function">
    <text evidence="2">Catalyzes the oxidative phosphorylation of glyceraldehyde 3-phosphate (G3P) to 1,3-bisphosphoglycerate (BPG) using the cofactor NAD. The first reaction step involves the formation of a hemiacetal intermediate between G3P and a cysteine residue, and this hemiacetal intermediate is then oxidized to a thioester, with concomitant reduction of NAD to NADH. The reduced NADH is then exchanged with the second NAD, and the thioester is attacked by a nucleophilic inorganic phosphate to produce BPG.</text>
</comment>
<comment type="catalytic activity">
    <reaction evidence="2">
        <text>D-glyceraldehyde 3-phosphate + phosphate + NAD(+) = (2R)-3-phospho-glyceroyl phosphate + NADH + H(+)</text>
        <dbReference type="Rhea" id="RHEA:10300"/>
        <dbReference type="ChEBI" id="CHEBI:15378"/>
        <dbReference type="ChEBI" id="CHEBI:43474"/>
        <dbReference type="ChEBI" id="CHEBI:57540"/>
        <dbReference type="ChEBI" id="CHEBI:57604"/>
        <dbReference type="ChEBI" id="CHEBI:57945"/>
        <dbReference type="ChEBI" id="CHEBI:59776"/>
        <dbReference type="EC" id="1.2.1.12"/>
    </reaction>
</comment>
<comment type="pathway">
    <text evidence="3">Carbohydrate degradation; glycolysis; pyruvate from D-glyceraldehyde 3-phosphate: step 1/5.</text>
</comment>
<comment type="subunit">
    <text evidence="2">Homotetramer.</text>
</comment>
<comment type="subcellular location">
    <subcellularLocation>
        <location evidence="3">Cytoplasm</location>
    </subcellularLocation>
</comment>
<comment type="similarity">
    <text evidence="3">Belongs to the glyceraldehyde-3-phosphate dehydrogenase family.</text>
</comment>
<gene>
    <name type="primary">gapA2</name>
    <name type="synonym">gapB</name>
    <name type="ordered locus">SAV1687</name>
</gene>
<evidence type="ECO:0000250" key="1">
    <source>
        <dbReference type="UniProtKB" id="P00362"/>
    </source>
</evidence>
<evidence type="ECO:0000250" key="2">
    <source>
        <dbReference type="UniProtKB" id="Q6GIL8"/>
    </source>
</evidence>
<evidence type="ECO:0000305" key="3"/>